<dbReference type="EC" id="2.4.2.17" evidence="1"/>
<dbReference type="EMBL" id="CP000653">
    <property type="protein sequence ID" value="ABP61298.1"/>
    <property type="molecule type" value="Genomic_DNA"/>
</dbReference>
<dbReference type="RefSeq" id="WP_015959631.1">
    <property type="nucleotide sequence ID" value="NC_009436.1"/>
</dbReference>
<dbReference type="SMR" id="A4WC68"/>
<dbReference type="STRING" id="399742.Ent638_2631"/>
<dbReference type="KEGG" id="ent:Ent638_2631"/>
<dbReference type="eggNOG" id="COG0040">
    <property type="taxonomic scope" value="Bacteria"/>
</dbReference>
<dbReference type="HOGENOM" id="CLU_038115_1_0_6"/>
<dbReference type="OrthoDB" id="9801867at2"/>
<dbReference type="UniPathway" id="UPA00031">
    <property type="reaction ID" value="UER00006"/>
</dbReference>
<dbReference type="Proteomes" id="UP000000230">
    <property type="component" value="Chromosome"/>
</dbReference>
<dbReference type="GO" id="GO:0005737">
    <property type="term" value="C:cytoplasm"/>
    <property type="evidence" value="ECO:0007669"/>
    <property type="project" value="UniProtKB-SubCell"/>
</dbReference>
<dbReference type="GO" id="GO:0005524">
    <property type="term" value="F:ATP binding"/>
    <property type="evidence" value="ECO:0007669"/>
    <property type="project" value="UniProtKB-KW"/>
</dbReference>
<dbReference type="GO" id="GO:0003879">
    <property type="term" value="F:ATP phosphoribosyltransferase activity"/>
    <property type="evidence" value="ECO:0007669"/>
    <property type="project" value="UniProtKB-UniRule"/>
</dbReference>
<dbReference type="GO" id="GO:0000287">
    <property type="term" value="F:magnesium ion binding"/>
    <property type="evidence" value="ECO:0007669"/>
    <property type="project" value="UniProtKB-UniRule"/>
</dbReference>
<dbReference type="GO" id="GO:0000105">
    <property type="term" value="P:L-histidine biosynthetic process"/>
    <property type="evidence" value="ECO:0007669"/>
    <property type="project" value="UniProtKB-UniRule"/>
</dbReference>
<dbReference type="CDD" id="cd13592">
    <property type="entry name" value="PBP2_HisGL2"/>
    <property type="match status" value="1"/>
</dbReference>
<dbReference type="FunFam" id="3.30.70.120:FF:000002">
    <property type="entry name" value="ATP phosphoribosyltransferase"/>
    <property type="match status" value="1"/>
</dbReference>
<dbReference type="FunFam" id="3.40.190.10:FF:000008">
    <property type="entry name" value="ATP phosphoribosyltransferase"/>
    <property type="match status" value="1"/>
</dbReference>
<dbReference type="Gene3D" id="3.30.70.120">
    <property type="match status" value="1"/>
</dbReference>
<dbReference type="Gene3D" id="3.40.190.10">
    <property type="entry name" value="Periplasmic binding protein-like II"/>
    <property type="match status" value="2"/>
</dbReference>
<dbReference type="HAMAP" id="MF_00079">
    <property type="entry name" value="HisG_Long"/>
    <property type="match status" value="1"/>
</dbReference>
<dbReference type="InterPro" id="IPR020621">
    <property type="entry name" value="ATP-PRT_HisG_long"/>
</dbReference>
<dbReference type="InterPro" id="IPR013820">
    <property type="entry name" value="ATP_PRibTrfase_cat"/>
</dbReference>
<dbReference type="InterPro" id="IPR018198">
    <property type="entry name" value="ATP_PRibTrfase_CS"/>
</dbReference>
<dbReference type="InterPro" id="IPR001348">
    <property type="entry name" value="ATP_PRibTrfase_HisG"/>
</dbReference>
<dbReference type="InterPro" id="IPR013115">
    <property type="entry name" value="HisG_C"/>
</dbReference>
<dbReference type="InterPro" id="IPR011322">
    <property type="entry name" value="N-reg_PII-like_a/b"/>
</dbReference>
<dbReference type="InterPro" id="IPR015867">
    <property type="entry name" value="N-reg_PII/ATP_PRibTrfase_C"/>
</dbReference>
<dbReference type="NCBIfam" id="TIGR00070">
    <property type="entry name" value="hisG"/>
    <property type="match status" value="1"/>
</dbReference>
<dbReference type="NCBIfam" id="TIGR03455">
    <property type="entry name" value="HisG_C-term"/>
    <property type="match status" value="1"/>
</dbReference>
<dbReference type="PANTHER" id="PTHR21403:SF8">
    <property type="entry name" value="ATP PHOSPHORIBOSYLTRANSFERASE"/>
    <property type="match status" value="1"/>
</dbReference>
<dbReference type="PANTHER" id="PTHR21403">
    <property type="entry name" value="ATP PHOSPHORIBOSYLTRANSFERASE ATP-PRTASE"/>
    <property type="match status" value="1"/>
</dbReference>
<dbReference type="Pfam" id="PF01634">
    <property type="entry name" value="HisG"/>
    <property type="match status" value="1"/>
</dbReference>
<dbReference type="Pfam" id="PF08029">
    <property type="entry name" value="HisG_C"/>
    <property type="match status" value="1"/>
</dbReference>
<dbReference type="SUPFAM" id="SSF54913">
    <property type="entry name" value="GlnB-like"/>
    <property type="match status" value="1"/>
</dbReference>
<dbReference type="SUPFAM" id="SSF53850">
    <property type="entry name" value="Periplasmic binding protein-like II"/>
    <property type="match status" value="1"/>
</dbReference>
<dbReference type="PROSITE" id="PS01316">
    <property type="entry name" value="ATP_P_PHORIBOSYLTR"/>
    <property type="match status" value="1"/>
</dbReference>
<organism>
    <name type="scientific">Enterobacter sp. (strain 638)</name>
    <dbReference type="NCBI Taxonomy" id="399742"/>
    <lineage>
        <taxon>Bacteria</taxon>
        <taxon>Pseudomonadati</taxon>
        <taxon>Pseudomonadota</taxon>
        <taxon>Gammaproteobacteria</taxon>
        <taxon>Enterobacterales</taxon>
        <taxon>Enterobacteriaceae</taxon>
        <taxon>Enterobacter</taxon>
    </lineage>
</organism>
<gene>
    <name evidence="1" type="primary">hisG</name>
    <name type="ordered locus">Ent638_2631</name>
</gene>
<reference key="1">
    <citation type="journal article" date="2010" name="PLoS Genet.">
        <title>Genome sequence of the plant growth promoting endophytic bacterium Enterobacter sp. 638.</title>
        <authorList>
            <person name="Taghavi S."/>
            <person name="van der Lelie D."/>
            <person name="Hoffman A."/>
            <person name="Zhang Y.B."/>
            <person name="Walla M.D."/>
            <person name="Vangronsveld J."/>
            <person name="Newman L."/>
            <person name="Monchy S."/>
        </authorList>
    </citation>
    <scope>NUCLEOTIDE SEQUENCE [LARGE SCALE GENOMIC DNA]</scope>
    <source>
        <strain>638</strain>
    </source>
</reference>
<proteinExistence type="inferred from homology"/>
<feature type="chain" id="PRO_1000057525" description="ATP phosphoribosyltransferase">
    <location>
        <begin position="1"/>
        <end position="299"/>
    </location>
</feature>
<comment type="function">
    <text evidence="1">Catalyzes the condensation of ATP and 5-phosphoribose 1-diphosphate to form N'-(5'-phosphoribosyl)-ATP (PR-ATP). Has a crucial role in the pathway because the rate of histidine biosynthesis seems to be controlled primarily by regulation of HisG enzymatic activity.</text>
</comment>
<comment type="catalytic activity">
    <reaction evidence="1">
        <text>1-(5-phospho-beta-D-ribosyl)-ATP + diphosphate = 5-phospho-alpha-D-ribose 1-diphosphate + ATP</text>
        <dbReference type="Rhea" id="RHEA:18473"/>
        <dbReference type="ChEBI" id="CHEBI:30616"/>
        <dbReference type="ChEBI" id="CHEBI:33019"/>
        <dbReference type="ChEBI" id="CHEBI:58017"/>
        <dbReference type="ChEBI" id="CHEBI:73183"/>
        <dbReference type="EC" id="2.4.2.17"/>
    </reaction>
</comment>
<comment type="cofactor">
    <cofactor evidence="1">
        <name>Mg(2+)</name>
        <dbReference type="ChEBI" id="CHEBI:18420"/>
    </cofactor>
</comment>
<comment type="activity regulation">
    <text evidence="1">Feedback inhibited by histidine.</text>
</comment>
<comment type="pathway">
    <text evidence="1">Amino-acid biosynthesis; L-histidine biosynthesis; L-histidine from 5-phospho-alpha-D-ribose 1-diphosphate: step 1/9.</text>
</comment>
<comment type="subunit">
    <text evidence="1">Equilibrium between an active dimeric form, an inactive hexameric form and higher aggregates. Interconversion between the various forms is largely reversible and is influenced by the natural substrates and inhibitors of the enzyme.</text>
</comment>
<comment type="subcellular location">
    <subcellularLocation>
        <location evidence="1">Cytoplasm</location>
    </subcellularLocation>
</comment>
<comment type="similarity">
    <text evidence="1">Belongs to the ATP phosphoribosyltransferase family. Long subfamily.</text>
</comment>
<keyword id="KW-0028">Amino-acid biosynthesis</keyword>
<keyword id="KW-0067">ATP-binding</keyword>
<keyword id="KW-0963">Cytoplasm</keyword>
<keyword id="KW-0328">Glycosyltransferase</keyword>
<keyword id="KW-0368">Histidine biosynthesis</keyword>
<keyword id="KW-0460">Magnesium</keyword>
<keyword id="KW-0479">Metal-binding</keyword>
<keyword id="KW-0547">Nucleotide-binding</keyword>
<keyword id="KW-0808">Transferase</keyword>
<protein>
    <recommendedName>
        <fullName evidence="1">ATP phosphoribosyltransferase</fullName>
        <shortName evidence="1">ATP-PRT</shortName>
        <shortName evidence="1">ATP-PRTase</shortName>
        <ecNumber evidence="1">2.4.2.17</ecNumber>
    </recommendedName>
</protein>
<accession>A4WC68</accession>
<name>HIS1_ENT38</name>
<evidence type="ECO:0000255" key="1">
    <source>
        <dbReference type="HAMAP-Rule" id="MF_00079"/>
    </source>
</evidence>
<sequence length="299" mass="33283">MLDNTRLRIAIQKSGRLSDDSRELLARCGIKINLHTQRLIALAENMPIDILRVRDDDIPGLVMDGVVDLGIIGENVLEEELLTRRAQGEDPRYFTLRRLDFGGCRLSLAMAVDEAWDGPAALNGKRIATSYPHLLKRYLDQKGVQFKSCLLNGSVEVAPRAGLADAICDLVSTGATLEANGLREVEVIYRSKACLIQRDGEMPEAKQQLIDRLLTRIQGVIQARESKYIMMHAPTERLDEVIALLPGAERPTILPLAGDQQRVAMHMVSSETLFWETMEKLKALGASSILVLPIEKMME</sequence>